<proteinExistence type="evidence at transcript level"/>
<protein>
    <recommendedName>
        <fullName evidence="5">O-fucosyltransferase 38</fullName>
        <shortName evidence="5">O-FucT-38</shortName>
        <ecNumber evidence="5">2.4.1.-</ecNumber>
    </recommendedName>
    <alternativeName>
        <fullName evidence="7">O-fucosyltransferase family protein</fullName>
    </alternativeName>
</protein>
<name>OFT38_ARATH</name>
<gene>
    <name evidence="5" type="primary">OFUT38</name>
    <name evidence="6" type="ordered locus">At5g64600</name>
    <name evidence="8" type="ORF">MUB3.12</name>
</gene>
<accession>F4KF16</accession>
<accession>A0A1W6AK57</accession>
<accession>Q8S9J4</accession>
<accession>Q9FLF8</accession>
<feature type="chain" id="PRO_0000442100" description="O-fucosyltransferase 38">
    <location>
        <begin position="1"/>
        <end position="522"/>
    </location>
</feature>
<feature type="transmembrane region" description="Helical; Signal-anchor for type II membrane protein" evidence="5">
    <location>
        <begin position="26"/>
        <end position="46"/>
    </location>
</feature>
<feature type="region of interest" description="Disordered" evidence="4">
    <location>
        <begin position="54"/>
        <end position="73"/>
    </location>
</feature>
<feature type="region of interest" description="Disordered" evidence="4">
    <location>
        <begin position="475"/>
        <end position="496"/>
    </location>
</feature>
<feature type="compositionally biased region" description="Basic and acidic residues" evidence="4">
    <location>
        <begin position="54"/>
        <end position="67"/>
    </location>
</feature>
<feature type="binding site" evidence="1">
    <location>
        <begin position="284"/>
        <end position="286"/>
    </location>
    <ligand>
        <name>substrate</name>
    </ligand>
</feature>
<feature type="glycosylation site" description="N-linked (GlcNAc...) asparagine" evidence="3">
    <location>
        <position position="147"/>
    </location>
</feature>
<feature type="glycosylation site" description="N-linked (GlcNAc...) asparagine" evidence="3">
    <location>
        <position position="325"/>
    </location>
</feature>
<feature type="sequence conflict" description="In Ref. 1; ARJ31455." evidence="5" ref="1">
    <original>L</original>
    <variation>S</variation>
    <location>
        <position position="31"/>
    </location>
</feature>
<organism>
    <name type="scientific">Arabidopsis thaliana</name>
    <name type="common">Mouse-ear cress</name>
    <dbReference type="NCBI Taxonomy" id="3702"/>
    <lineage>
        <taxon>Eukaryota</taxon>
        <taxon>Viridiplantae</taxon>
        <taxon>Streptophyta</taxon>
        <taxon>Embryophyta</taxon>
        <taxon>Tracheophyta</taxon>
        <taxon>Spermatophyta</taxon>
        <taxon>Magnoliopsida</taxon>
        <taxon>eudicotyledons</taxon>
        <taxon>Gunneridae</taxon>
        <taxon>Pentapetalae</taxon>
        <taxon>rosids</taxon>
        <taxon>malvids</taxon>
        <taxon>Brassicales</taxon>
        <taxon>Brassicaceae</taxon>
        <taxon>Camelineae</taxon>
        <taxon>Arabidopsis</taxon>
    </lineage>
</organism>
<dbReference type="EC" id="2.4.1.-" evidence="5"/>
<dbReference type="EMBL" id="KY906091">
    <property type="protein sequence ID" value="ARJ31455.1"/>
    <property type="molecule type" value="mRNA"/>
</dbReference>
<dbReference type="EMBL" id="AB010076">
    <property type="protein sequence ID" value="BAB11427.1"/>
    <property type="status" value="ALT_SEQ"/>
    <property type="molecule type" value="Genomic_DNA"/>
</dbReference>
<dbReference type="EMBL" id="CP002688">
    <property type="protein sequence ID" value="AED97925.1"/>
    <property type="molecule type" value="Genomic_DNA"/>
</dbReference>
<dbReference type="EMBL" id="AY075659">
    <property type="protein sequence ID" value="AAL77666.1"/>
    <property type="status" value="ALT_INIT"/>
    <property type="molecule type" value="mRNA"/>
</dbReference>
<dbReference type="EMBL" id="AY120703">
    <property type="protein sequence ID" value="AAM52246.1"/>
    <property type="molecule type" value="mRNA"/>
</dbReference>
<dbReference type="RefSeq" id="NP_201265.3">
    <property type="nucleotide sequence ID" value="NM_125856.6"/>
</dbReference>
<dbReference type="FunCoup" id="F4KF16">
    <property type="interactions" value="1901"/>
</dbReference>
<dbReference type="GlyCosmos" id="F4KF16">
    <property type="glycosylation" value="2 sites, No reported glycans"/>
</dbReference>
<dbReference type="GlyGen" id="F4KF16">
    <property type="glycosylation" value="2 sites"/>
</dbReference>
<dbReference type="PaxDb" id="3702-AT5G64600.1"/>
<dbReference type="ProteomicsDB" id="238933"/>
<dbReference type="EnsemblPlants" id="AT5G64600.1">
    <property type="protein sequence ID" value="AT5G64600.1"/>
    <property type="gene ID" value="AT5G64600"/>
</dbReference>
<dbReference type="GeneID" id="836581"/>
<dbReference type="Gramene" id="AT5G64600.1">
    <property type="protein sequence ID" value="AT5G64600.1"/>
    <property type="gene ID" value="AT5G64600"/>
</dbReference>
<dbReference type="KEGG" id="ath:AT5G64600"/>
<dbReference type="Araport" id="AT5G64600"/>
<dbReference type="TAIR" id="AT5G64600"/>
<dbReference type="eggNOG" id="ENOG502QSYZ">
    <property type="taxonomic scope" value="Eukaryota"/>
</dbReference>
<dbReference type="HOGENOM" id="CLU_018420_7_0_1"/>
<dbReference type="InParanoid" id="F4KF16"/>
<dbReference type="OMA" id="YYALRFS"/>
<dbReference type="PRO" id="PR:F4KF16"/>
<dbReference type="Proteomes" id="UP000006548">
    <property type="component" value="Chromosome 5"/>
</dbReference>
<dbReference type="ExpressionAtlas" id="F4KF16">
    <property type="expression patterns" value="baseline and differential"/>
</dbReference>
<dbReference type="GO" id="GO:0005737">
    <property type="term" value="C:cytoplasm"/>
    <property type="evidence" value="ECO:0007005"/>
    <property type="project" value="TAIR"/>
</dbReference>
<dbReference type="GO" id="GO:0016020">
    <property type="term" value="C:membrane"/>
    <property type="evidence" value="ECO:0007669"/>
    <property type="project" value="UniProtKB-SubCell"/>
</dbReference>
<dbReference type="GO" id="GO:0005634">
    <property type="term" value="C:nucleus"/>
    <property type="evidence" value="ECO:0007005"/>
    <property type="project" value="TAIR"/>
</dbReference>
<dbReference type="GO" id="GO:0016757">
    <property type="term" value="F:glycosyltransferase activity"/>
    <property type="evidence" value="ECO:0007669"/>
    <property type="project" value="UniProtKB-KW"/>
</dbReference>
<dbReference type="GO" id="GO:0006004">
    <property type="term" value="P:fucose metabolic process"/>
    <property type="evidence" value="ECO:0007669"/>
    <property type="project" value="UniProtKB-KW"/>
</dbReference>
<dbReference type="CDD" id="cd11299">
    <property type="entry name" value="O-FucT_plant"/>
    <property type="match status" value="1"/>
</dbReference>
<dbReference type="InterPro" id="IPR024709">
    <property type="entry name" value="FucosylTrfase_pln"/>
</dbReference>
<dbReference type="InterPro" id="IPR019378">
    <property type="entry name" value="GDP-Fuc_O-FucTrfase"/>
</dbReference>
<dbReference type="PANTHER" id="PTHR31741:SF15">
    <property type="entry name" value="O-FUCOSYLTRANSFERASE 38"/>
    <property type="match status" value="1"/>
</dbReference>
<dbReference type="PANTHER" id="PTHR31741">
    <property type="entry name" value="OS02G0726500 PROTEIN-RELATED"/>
    <property type="match status" value="1"/>
</dbReference>
<dbReference type="Pfam" id="PF10250">
    <property type="entry name" value="O-FucT"/>
    <property type="match status" value="1"/>
</dbReference>
<dbReference type="PIRSF" id="PIRSF009360">
    <property type="entry name" value="UCP009360"/>
    <property type="match status" value="1"/>
</dbReference>
<sequence length="522" mass="60057">MVKHRNSSRSIISYSSSIARFFSRKAISLYLIFVFAFTIWVLVFSSRNIQTDDDHTKHQQQHHRDLIDSESFPPPYLPPRKNLQKPYENTQLWTPPFSFGLHPCVKPTPKYKEFSESDHYITVKSNGGLNQMRTGIADIVAVAHIMNATLVIPELDKRSFWQDSSVFSDIFDEEQFIKSLRRDVKVIKKLPKEVESLPRARKHFTSWSSVGYYEEMTHLWKEYKVIHVAKSDSRLANNDLPIDVQRLRCRVLYRGLCFSPAIESLGQKLVERLKSRAGRYIALHLRYEKDMLAFTGCTYGLTDAESEELRVMRESTSHWKIKSINSTEQREEGLCPLTPKEVGIFLKGLGYSQSTVIYIAAGEIYGGDDRLSELKSRFPNLVFKETLAGNEELKGFTGHATKTAALDYIISVESDVFVPSHSGNMARAVEGHRRFLGHRRTITPDRKGLVKLFVKMERGQLKEGPKLSNFVNQMHKDRQGAPRRRKGPTQGIKGRARFRTEEAFYENPYPECICSSKEHKEP</sequence>
<keyword id="KW-0119">Carbohydrate metabolism</keyword>
<keyword id="KW-0294">Fucose metabolism</keyword>
<keyword id="KW-0325">Glycoprotein</keyword>
<keyword id="KW-0328">Glycosyltransferase</keyword>
<keyword id="KW-0472">Membrane</keyword>
<keyword id="KW-1185">Reference proteome</keyword>
<keyword id="KW-0735">Signal-anchor</keyword>
<keyword id="KW-0808">Transferase</keyword>
<keyword id="KW-0812">Transmembrane</keyword>
<keyword id="KW-1133">Transmembrane helix</keyword>
<reference key="1">
    <citation type="submission" date="2017-04" db="EMBL/GenBank/DDBJ databases">
        <title>Arabidopsis glycosyltransferases: an update.</title>
        <authorList>
            <person name="Zeng W."/>
            <person name="Gluza P."/>
            <person name="Heazlewood J."/>
        </authorList>
    </citation>
    <scope>NUCLEOTIDE SEQUENCE [MRNA]</scope>
    <source>
        <strain>cv. Columbia</strain>
    </source>
</reference>
<reference key="2">
    <citation type="journal article" date="1998" name="DNA Res.">
        <title>Structural analysis of Arabidopsis thaliana chromosome 5. IV. Sequence features of the regions of 1,456,315 bp covered by nineteen physically assigned P1 and TAC clones.</title>
        <authorList>
            <person name="Sato S."/>
            <person name="Kaneko T."/>
            <person name="Kotani H."/>
            <person name="Nakamura Y."/>
            <person name="Asamizu E."/>
            <person name="Miyajima N."/>
            <person name="Tabata S."/>
        </authorList>
    </citation>
    <scope>NUCLEOTIDE SEQUENCE [LARGE SCALE GENOMIC DNA]</scope>
    <source>
        <strain>cv. Columbia</strain>
    </source>
</reference>
<reference key="3">
    <citation type="journal article" date="2017" name="Plant J.">
        <title>Araport11: a complete reannotation of the Arabidopsis thaliana reference genome.</title>
        <authorList>
            <person name="Cheng C.Y."/>
            <person name="Krishnakumar V."/>
            <person name="Chan A.P."/>
            <person name="Thibaud-Nissen F."/>
            <person name="Schobel S."/>
            <person name="Town C.D."/>
        </authorList>
    </citation>
    <scope>GENOME REANNOTATION</scope>
    <source>
        <strain>cv. Columbia</strain>
    </source>
</reference>
<reference key="4">
    <citation type="journal article" date="2003" name="Science">
        <title>Empirical analysis of transcriptional activity in the Arabidopsis genome.</title>
        <authorList>
            <person name="Yamada K."/>
            <person name="Lim J."/>
            <person name="Dale J.M."/>
            <person name="Chen H."/>
            <person name="Shinn P."/>
            <person name="Palm C.J."/>
            <person name="Southwick A.M."/>
            <person name="Wu H.C."/>
            <person name="Kim C.J."/>
            <person name="Nguyen M."/>
            <person name="Pham P.K."/>
            <person name="Cheuk R.F."/>
            <person name="Karlin-Newmann G."/>
            <person name="Liu S.X."/>
            <person name="Lam B."/>
            <person name="Sakano H."/>
            <person name="Wu T."/>
            <person name="Yu G."/>
            <person name="Miranda M."/>
            <person name="Quach H.L."/>
            <person name="Tripp M."/>
            <person name="Chang C.H."/>
            <person name="Lee J.M."/>
            <person name="Toriumi M.J."/>
            <person name="Chan M.M."/>
            <person name="Tang C.C."/>
            <person name="Onodera C.S."/>
            <person name="Deng J.M."/>
            <person name="Akiyama K."/>
            <person name="Ansari Y."/>
            <person name="Arakawa T."/>
            <person name="Banh J."/>
            <person name="Banno F."/>
            <person name="Bowser L."/>
            <person name="Brooks S.Y."/>
            <person name="Carninci P."/>
            <person name="Chao Q."/>
            <person name="Choy N."/>
            <person name="Enju A."/>
            <person name="Goldsmith A.D."/>
            <person name="Gurjal M."/>
            <person name="Hansen N.F."/>
            <person name="Hayashizaki Y."/>
            <person name="Johnson-Hopson C."/>
            <person name="Hsuan V.W."/>
            <person name="Iida K."/>
            <person name="Karnes M."/>
            <person name="Khan S."/>
            <person name="Koesema E."/>
            <person name="Ishida J."/>
            <person name="Jiang P.X."/>
            <person name="Jones T."/>
            <person name="Kawai J."/>
            <person name="Kamiya A."/>
            <person name="Meyers C."/>
            <person name="Nakajima M."/>
            <person name="Narusaka M."/>
            <person name="Seki M."/>
            <person name="Sakurai T."/>
            <person name="Satou M."/>
            <person name="Tamse R."/>
            <person name="Vaysberg M."/>
            <person name="Wallender E.K."/>
            <person name="Wong C."/>
            <person name="Yamamura Y."/>
            <person name="Yuan S."/>
            <person name="Shinozaki K."/>
            <person name="Davis R.W."/>
            <person name="Theologis A."/>
            <person name="Ecker J.R."/>
        </authorList>
    </citation>
    <scope>NUCLEOTIDE SEQUENCE [LARGE SCALE MRNA] OF 59-522</scope>
    <source>
        <strain>cv. Columbia</strain>
    </source>
</reference>
<reference key="5">
    <citation type="journal article" date="2012" name="Front. Plant Sci.">
        <title>Plant glycosyltransferases beyond CAZy: a perspective on DUF families.</title>
        <authorList>
            <person name="Hansen S.F."/>
            <person name="Harholt J."/>
            <person name="Oikawa A."/>
            <person name="Scheller H.V."/>
        </authorList>
    </citation>
    <scope>GENE FAMILY</scope>
    <scope>REVIEW</scope>
</reference>
<reference key="6">
    <citation type="journal article" date="2012" name="PLoS ONE">
        <title>The FRIABLE1 gene product affects cell adhesion in Arabidopsis.</title>
        <authorList>
            <person name="Neumetzler L."/>
            <person name="Humphrey T."/>
            <person name="Lumba S."/>
            <person name="Snyder S."/>
            <person name="Yeats T.H."/>
            <person name="Usadel B."/>
            <person name="Vasilevski A."/>
            <person name="Patel J."/>
            <person name="Rose J.K."/>
            <person name="Persson S."/>
            <person name="Bonetta D."/>
        </authorList>
    </citation>
    <scope>GENE FAMILY</scope>
</reference>
<reference key="7">
    <citation type="journal article" date="2012" name="PLoS ONE">
        <title>Identification of putative rhamnogalacturonan-II specific glycosyltransferases in Arabidopsis using a combination of bioinformatics approaches.</title>
        <authorList>
            <person name="Voxeur A."/>
            <person name="Andre A."/>
            <person name="Breton C."/>
            <person name="Lerouge P."/>
        </authorList>
    </citation>
    <scope>GENE FAMILY</scope>
</reference>
<reference key="8">
    <citation type="journal article" date="2013" name="Plant J.">
        <title>Identification of an additional protein involved in mannan biosynthesis.</title>
        <authorList>
            <person name="Wang Y."/>
            <person name="Mortimer J.C."/>
            <person name="Davis J."/>
            <person name="Dupree P."/>
            <person name="Keegstra K."/>
        </authorList>
    </citation>
    <scope>GENE FAMILY</scope>
</reference>
<reference key="9">
    <citation type="journal article" date="2014" name="Plant J.">
        <title>The plant glycosyltransferase clone collection for functional genomics.</title>
        <authorList>
            <person name="Lao J."/>
            <person name="Oikawa A."/>
            <person name="Bromley J.R."/>
            <person name="McInerney P."/>
            <person name="Suttangkakul A."/>
            <person name="Smith-Moritz A.M."/>
            <person name="Plahar H."/>
            <person name="Chiu T.-Y."/>
            <person name="Gonzalez Fernandez-Nino S.M.G."/>
            <person name="Ebert B."/>
            <person name="Yang F."/>
            <person name="Christiansen K.M."/>
            <person name="Hansen S.F."/>
            <person name="Stonebloom S."/>
            <person name="Adams P.D."/>
            <person name="Ronald P.C."/>
            <person name="Hillson N.J."/>
            <person name="Hadi M.Z."/>
            <person name="Vega-Sanchez M.E."/>
            <person name="Loque D."/>
            <person name="Scheller H.V."/>
            <person name="Heazlewood J.L."/>
        </authorList>
    </citation>
    <scope>WEB RESOURCE</scope>
</reference>
<comment type="pathway">
    <text evidence="5">Glycan metabolism.</text>
</comment>
<comment type="subcellular location">
    <subcellularLocation>
        <location evidence="2">Membrane</location>
        <topology evidence="5">Single-pass type II membrane protein</topology>
    </subcellularLocation>
</comment>
<comment type="similarity">
    <text evidence="5">Belongs to the glycosyltransferase GT106 family.</text>
</comment>
<comment type="sequence caution" evidence="5">
    <conflict type="erroneous initiation">
        <sequence resource="EMBL-CDS" id="AAL77666"/>
    </conflict>
    <text>Truncated N-terminus.</text>
</comment>
<comment type="sequence caution" evidence="5">
    <conflict type="erroneous gene model prediction">
        <sequence resource="EMBL-CDS" id="BAB11427"/>
    </conflict>
</comment>
<evidence type="ECO:0000250" key="1">
    <source>
        <dbReference type="UniProtKB" id="Q9H488"/>
    </source>
</evidence>
<evidence type="ECO:0000255" key="2"/>
<evidence type="ECO:0000255" key="3">
    <source>
        <dbReference type="PROSITE-ProRule" id="PRU00498"/>
    </source>
</evidence>
<evidence type="ECO:0000256" key="4">
    <source>
        <dbReference type="SAM" id="MobiDB-lite"/>
    </source>
</evidence>
<evidence type="ECO:0000305" key="5"/>
<evidence type="ECO:0000312" key="6">
    <source>
        <dbReference type="Araport" id="AT5G64600"/>
    </source>
</evidence>
<evidence type="ECO:0000312" key="7">
    <source>
        <dbReference type="EMBL" id="ARJ31455.1"/>
    </source>
</evidence>
<evidence type="ECO:0000312" key="8">
    <source>
        <dbReference type="EMBL" id="BAB11427.1"/>
    </source>
</evidence>